<gene>
    <name type="primary">atpC</name>
    <name type="ordered locus">BSU36800</name>
</gene>
<accession>P37812</accession>
<feature type="chain" id="PRO_0000188101" description="ATP synthase epsilon chain">
    <location>
        <begin position="1"/>
        <end position="132"/>
    </location>
</feature>
<feature type="region of interest" description="Disordered" evidence="2">
    <location>
        <begin position="88"/>
        <end position="112"/>
    </location>
</feature>
<feature type="compositionally biased region" description="Basic and acidic residues" evidence="2">
    <location>
        <begin position="88"/>
        <end position="102"/>
    </location>
</feature>
<reference key="1">
    <citation type="journal article" date="1994" name="J. Bacteriol.">
        <title>Bacillus subtilis F0F1 ATPase: DNA sequence of the atp operon and characterization of atp mutants.</title>
        <authorList>
            <person name="Santana M."/>
            <person name="Ionescu M.S."/>
            <person name="Vertes A."/>
            <person name="Longin R."/>
            <person name="Kunst F."/>
            <person name="Danchin A."/>
            <person name="Glaser P."/>
        </authorList>
    </citation>
    <scope>NUCLEOTIDE SEQUENCE [GENOMIC DNA]</scope>
    <source>
        <strain>168</strain>
    </source>
</reference>
<reference key="2">
    <citation type="journal article" date="1997" name="Nature">
        <title>The complete genome sequence of the Gram-positive bacterium Bacillus subtilis.</title>
        <authorList>
            <person name="Kunst F."/>
            <person name="Ogasawara N."/>
            <person name="Moszer I."/>
            <person name="Albertini A.M."/>
            <person name="Alloni G."/>
            <person name="Azevedo V."/>
            <person name="Bertero M.G."/>
            <person name="Bessieres P."/>
            <person name="Bolotin A."/>
            <person name="Borchert S."/>
            <person name="Borriss R."/>
            <person name="Boursier L."/>
            <person name="Brans A."/>
            <person name="Braun M."/>
            <person name="Brignell S.C."/>
            <person name="Bron S."/>
            <person name="Brouillet S."/>
            <person name="Bruschi C.V."/>
            <person name="Caldwell B."/>
            <person name="Capuano V."/>
            <person name="Carter N.M."/>
            <person name="Choi S.-K."/>
            <person name="Codani J.-J."/>
            <person name="Connerton I.F."/>
            <person name="Cummings N.J."/>
            <person name="Daniel R.A."/>
            <person name="Denizot F."/>
            <person name="Devine K.M."/>
            <person name="Duesterhoeft A."/>
            <person name="Ehrlich S.D."/>
            <person name="Emmerson P.T."/>
            <person name="Entian K.-D."/>
            <person name="Errington J."/>
            <person name="Fabret C."/>
            <person name="Ferrari E."/>
            <person name="Foulger D."/>
            <person name="Fritz C."/>
            <person name="Fujita M."/>
            <person name="Fujita Y."/>
            <person name="Fuma S."/>
            <person name="Galizzi A."/>
            <person name="Galleron N."/>
            <person name="Ghim S.-Y."/>
            <person name="Glaser P."/>
            <person name="Goffeau A."/>
            <person name="Golightly E.J."/>
            <person name="Grandi G."/>
            <person name="Guiseppi G."/>
            <person name="Guy B.J."/>
            <person name="Haga K."/>
            <person name="Haiech J."/>
            <person name="Harwood C.R."/>
            <person name="Henaut A."/>
            <person name="Hilbert H."/>
            <person name="Holsappel S."/>
            <person name="Hosono S."/>
            <person name="Hullo M.-F."/>
            <person name="Itaya M."/>
            <person name="Jones L.-M."/>
            <person name="Joris B."/>
            <person name="Karamata D."/>
            <person name="Kasahara Y."/>
            <person name="Klaerr-Blanchard M."/>
            <person name="Klein C."/>
            <person name="Kobayashi Y."/>
            <person name="Koetter P."/>
            <person name="Koningstein G."/>
            <person name="Krogh S."/>
            <person name="Kumano M."/>
            <person name="Kurita K."/>
            <person name="Lapidus A."/>
            <person name="Lardinois S."/>
            <person name="Lauber J."/>
            <person name="Lazarevic V."/>
            <person name="Lee S.-M."/>
            <person name="Levine A."/>
            <person name="Liu H."/>
            <person name="Masuda S."/>
            <person name="Mauel C."/>
            <person name="Medigue C."/>
            <person name="Medina N."/>
            <person name="Mellado R.P."/>
            <person name="Mizuno M."/>
            <person name="Moestl D."/>
            <person name="Nakai S."/>
            <person name="Noback M."/>
            <person name="Noone D."/>
            <person name="O'Reilly M."/>
            <person name="Ogawa K."/>
            <person name="Ogiwara A."/>
            <person name="Oudega B."/>
            <person name="Park S.-H."/>
            <person name="Parro V."/>
            <person name="Pohl T.M."/>
            <person name="Portetelle D."/>
            <person name="Porwollik S."/>
            <person name="Prescott A.M."/>
            <person name="Presecan E."/>
            <person name="Pujic P."/>
            <person name="Purnelle B."/>
            <person name="Rapoport G."/>
            <person name="Rey M."/>
            <person name="Reynolds S."/>
            <person name="Rieger M."/>
            <person name="Rivolta C."/>
            <person name="Rocha E."/>
            <person name="Roche B."/>
            <person name="Rose M."/>
            <person name="Sadaie Y."/>
            <person name="Sato T."/>
            <person name="Scanlan E."/>
            <person name="Schleich S."/>
            <person name="Schroeter R."/>
            <person name="Scoffone F."/>
            <person name="Sekiguchi J."/>
            <person name="Sekowska A."/>
            <person name="Seror S.J."/>
            <person name="Serror P."/>
            <person name="Shin B.-S."/>
            <person name="Soldo B."/>
            <person name="Sorokin A."/>
            <person name="Tacconi E."/>
            <person name="Takagi T."/>
            <person name="Takahashi H."/>
            <person name="Takemaru K."/>
            <person name="Takeuchi M."/>
            <person name="Tamakoshi A."/>
            <person name="Tanaka T."/>
            <person name="Terpstra P."/>
            <person name="Tognoni A."/>
            <person name="Tosato V."/>
            <person name="Uchiyama S."/>
            <person name="Vandenbol M."/>
            <person name="Vannier F."/>
            <person name="Vassarotti A."/>
            <person name="Viari A."/>
            <person name="Wambutt R."/>
            <person name="Wedler E."/>
            <person name="Wedler H."/>
            <person name="Weitzenegger T."/>
            <person name="Winters P."/>
            <person name="Wipat A."/>
            <person name="Yamamoto H."/>
            <person name="Yamane K."/>
            <person name="Yasumoto K."/>
            <person name="Yata K."/>
            <person name="Yoshida K."/>
            <person name="Yoshikawa H.-F."/>
            <person name="Zumstein E."/>
            <person name="Yoshikawa H."/>
            <person name="Danchin A."/>
        </authorList>
    </citation>
    <scope>NUCLEOTIDE SEQUENCE [LARGE SCALE GENOMIC DNA]</scope>
    <source>
        <strain>168</strain>
    </source>
</reference>
<reference key="3">
    <citation type="submission" date="1996-10" db="EMBL/GenBank/DDBJ databases">
        <authorList>
            <person name="Glaser P."/>
            <person name="Danchin A."/>
            <person name="Kunst F."/>
            <person name="Moszer I."/>
        </authorList>
    </citation>
    <scope>NUCLEOTIDE SEQUENCE [GENOMIC DNA] OF 89-132</scope>
    <source>
        <strain>168</strain>
    </source>
</reference>
<reference key="4">
    <citation type="journal article" date="1996" name="J. Bacteriol.">
        <title>Cold shock stress-induced proteins in Bacillus subtilis.</title>
        <authorList>
            <person name="Graumann P."/>
            <person name="Schroeder K."/>
            <person name="Schmid R."/>
            <person name="Marahiel M.A."/>
        </authorList>
    </citation>
    <scope>PROTEIN SEQUENCE OF 1-18</scope>
    <source>
        <strain>168 / JH642</strain>
    </source>
</reference>
<reference key="5">
    <citation type="journal article" date="2009" name="J. Bacteriol.">
        <title>Bacillus subtilis SpoIIIJ and YqjG function in membrane protein biogenesis.</title>
        <authorList>
            <person name="Saller M.J."/>
            <person name="Fusetti F."/>
            <person name="Driessen A.J."/>
        </authorList>
    </citation>
    <scope>IDENTIFICATION BY MASS SPECTROMETRY</scope>
    <scope>INTERACTION WITH SPOIIIJ AND YQJG</scope>
    <source>
        <strain>168</strain>
    </source>
</reference>
<organism>
    <name type="scientific">Bacillus subtilis (strain 168)</name>
    <dbReference type="NCBI Taxonomy" id="224308"/>
    <lineage>
        <taxon>Bacteria</taxon>
        <taxon>Bacillati</taxon>
        <taxon>Bacillota</taxon>
        <taxon>Bacilli</taxon>
        <taxon>Bacillales</taxon>
        <taxon>Bacillaceae</taxon>
        <taxon>Bacillus</taxon>
    </lineage>
</organism>
<protein>
    <recommendedName>
        <fullName>ATP synthase epsilon chain</fullName>
    </recommendedName>
    <alternativeName>
        <fullName>ATP synthase F1 sector epsilon subunit</fullName>
    </alternativeName>
    <alternativeName>
        <fullName>F-ATPase epsilon subunit</fullName>
    </alternativeName>
</protein>
<comment type="function">
    <text>Produces ATP from ADP in the presence of a proton gradient across the membrane.</text>
</comment>
<comment type="subunit">
    <text evidence="3 4">F-type ATPases have 2 components, CF(1) - the catalytic core - and CF(0) - the membrane proton channel. CF(1) has five subunits: alpha(3), beta(3), gamma(1), delta(1), epsilon(1). CF(0) has three main subunits: a, b and c (Probable). The F(1)F(0) complex interacts with SpoIIIJ and YqjG; YqgA is found in the same complex.</text>
</comment>
<comment type="subcellular location">
    <subcellularLocation>
        <location evidence="1">Cell membrane</location>
        <topology evidence="1">Peripheral membrane protein</topology>
    </subcellularLocation>
</comment>
<comment type="similarity">
    <text evidence="4">Belongs to the ATPase epsilon chain family.</text>
</comment>
<keyword id="KW-0066">ATP synthesis</keyword>
<keyword id="KW-1003">Cell membrane</keyword>
<keyword id="KW-0139">CF(1)</keyword>
<keyword id="KW-0903">Direct protein sequencing</keyword>
<keyword id="KW-0375">Hydrogen ion transport</keyword>
<keyword id="KW-0406">Ion transport</keyword>
<keyword id="KW-0472">Membrane</keyword>
<keyword id="KW-1185">Reference proteome</keyword>
<keyword id="KW-0813">Transport</keyword>
<name>ATPE_BACSU</name>
<evidence type="ECO:0000250" key="1"/>
<evidence type="ECO:0000256" key="2">
    <source>
        <dbReference type="SAM" id="MobiDB-lite"/>
    </source>
</evidence>
<evidence type="ECO:0000269" key="3">
    <source>
    </source>
</evidence>
<evidence type="ECO:0000305" key="4"/>
<sequence>MKTVKVNIVTPDGPVYDADIEMVSVRAESGDLGILPGHIPTVAPLKIGAVRLKKDGQTEMVAVSGGFVEVRPDHVTILAQAAETAEGIDKERAEAARQRAQERLNSQSDDTDIRRAELALQRALNRLDVAGK</sequence>
<dbReference type="EMBL" id="Z28592">
    <property type="protein sequence ID" value="CAA82261.1"/>
    <property type="molecule type" value="Genomic_DNA"/>
</dbReference>
<dbReference type="EMBL" id="AL009126">
    <property type="protein sequence ID" value="CAB15697.1"/>
    <property type="molecule type" value="Genomic_DNA"/>
</dbReference>
<dbReference type="EMBL" id="Z81356">
    <property type="protein sequence ID" value="CAB03676.1"/>
    <property type="molecule type" value="Genomic_DNA"/>
</dbReference>
<dbReference type="PIR" id="I40369">
    <property type="entry name" value="I40369"/>
</dbReference>
<dbReference type="RefSeq" id="NP_391561.1">
    <property type="nucleotide sequence ID" value="NC_000964.3"/>
</dbReference>
<dbReference type="RefSeq" id="WP_003227688.1">
    <property type="nucleotide sequence ID" value="NZ_OZ025638.1"/>
</dbReference>
<dbReference type="SMR" id="P37812"/>
<dbReference type="FunCoup" id="P37812">
    <property type="interactions" value="639"/>
</dbReference>
<dbReference type="IntAct" id="P37812">
    <property type="interactions" value="2"/>
</dbReference>
<dbReference type="STRING" id="224308.BSU36800"/>
<dbReference type="jPOST" id="P37812"/>
<dbReference type="PaxDb" id="224308-BSU36800"/>
<dbReference type="EnsemblBacteria" id="CAB15697">
    <property type="protein sequence ID" value="CAB15697"/>
    <property type="gene ID" value="BSU_36800"/>
</dbReference>
<dbReference type="GeneID" id="936994"/>
<dbReference type="KEGG" id="bsu:BSU36800"/>
<dbReference type="PATRIC" id="fig|224308.179.peg.3986"/>
<dbReference type="eggNOG" id="COG0355">
    <property type="taxonomic scope" value="Bacteria"/>
</dbReference>
<dbReference type="InParanoid" id="P37812"/>
<dbReference type="OrthoDB" id="9804110at2"/>
<dbReference type="PhylomeDB" id="P37812"/>
<dbReference type="BioCyc" id="BSUB:BSU36800-MONOMER"/>
<dbReference type="SABIO-RK" id="P37812"/>
<dbReference type="Proteomes" id="UP000001570">
    <property type="component" value="Chromosome"/>
</dbReference>
<dbReference type="GO" id="GO:0005886">
    <property type="term" value="C:plasma membrane"/>
    <property type="evidence" value="ECO:0007669"/>
    <property type="project" value="UniProtKB-SubCell"/>
</dbReference>
<dbReference type="GO" id="GO:0045259">
    <property type="term" value="C:proton-transporting ATP synthase complex"/>
    <property type="evidence" value="ECO:0007669"/>
    <property type="project" value="UniProtKB-KW"/>
</dbReference>
<dbReference type="GO" id="GO:0005524">
    <property type="term" value="F:ATP binding"/>
    <property type="evidence" value="ECO:0007669"/>
    <property type="project" value="UniProtKB-UniRule"/>
</dbReference>
<dbReference type="GO" id="GO:0046933">
    <property type="term" value="F:proton-transporting ATP synthase activity, rotational mechanism"/>
    <property type="evidence" value="ECO:0007669"/>
    <property type="project" value="UniProtKB-UniRule"/>
</dbReference>
<dbReference type="GO" id="GO:0015986">
    <property type="term" value="P:proton motive force-driven ATP synthesis"/>
    <property type="evidence" value="ECO:0000318"/>
    <property type="project" value="GO_Central"/>
</dbReference>
<dbReference type="CDD" id="cd12152">
    <property type="entry name" value="F1-ATPase_delta"/>
    <property type="match status" value="1"/>
</dbReference>
<dbReference type="FunFam" id="1.20.5.440:FF:000001">
    <property type="entry name" value="ATP synthase epsilon chain"/>
    <property type="match status" value="1"/>
</dbReference>
<dbReference type="FunFam" id="2.60.15.10:FF:000001">
    <property type="entry name" value="ATP synthase epsilon chain"/>
    <property type="match status" value="1"/>
</dbReference>
<dbReference type="Gene3D" id="1.20.5.440">
    <property type="entry name" value="ATP synthase delta/epsilon subunit, C-terminal domain"/>
    <property type="match status" value="1"/>
</dbReference>
<dbReference type="Gene3D" id="2.60.15.10">
    <property type="entry name" value="F0F1 ATP synthase delta/epsilon subunit, N-terminal"/>
    <property type="match status" value="1"/>
</dbReference>
<dbReference type="HAMAP" id="MF_00530">
    <property type="entry name" value="ATP_synth_epsil_bac"/>
    <property type="match status" value="1"/>
</dbReference>
<dbReference type="InterPro" id="IPR036794">
    <property type="entry name" value="ATP_F1_dsu/esu_C_sf"/>
</dbReference>
<dbReference type="InterPro" id="IPR001469">
    <property type="entry name" value="ATP_synth_F1_dsu/esu"/>
</dbReference>
<dbReference type="InterPro" id="IPR020546">
    <property type="entry name" value="ATP_synth_F1_dsu/esu_N"/>
</dbReference>
<dbReference type="InterPro" id="IPR020547">
    <property type="entry name" value="ATP_synth_F1_esu_C"/>
</dbReference>
<dbReference type="InterPro" id="IPR036771">
    <property type="entry name" value="ATPsynth_dsu/esu_N"/>
</dbReference>
<dbReference type="NCBIfam" id="TIGR01216">
    <property type="entry name" value="ATP_synt_epsi"/>
    <property type="match status" value="1"/>
</dbReference>
<dbReference type="NCBIfam" id="NF001846">
    <property type="entry name" value="PRK00571.1-3"/>
    <property type="match status" value="1"/>
</dbReference>
<dbReference type="NCBIfam" id="NF009980">
    <property type="entry name" value="PRK13446.1"/>
    <property type="match status" value="1"/>
</dbReference>
<dbReference type="PANTHER" id="PTHR13822">
    <property type="entry name" value="ATP SYNTHASE DELTA/EPSILON CHAIN"/>
    <property type="match status" value="1"/>
</dbReference>
<dbReference type="PANTHER" id="PTHR13822:SF10">
    <property type="entry name" value="ATP SYNTHASE EPSILON CHAIN, CHLOROPLASTIC"/>
    <property type="match status" value="1"/>
</dbReference>
<dbReference type="Pfam" id="PF00401">
    <property type="entry name" value="ATP-synt_DE"/>
    <property type="match status" value="1"/>
</dbReference>
<dbReference type="Pfam" id="PF02823">
    <property type="entry name" value="ATP-synt_DE_N"/>
    <property type="match status" value="1"/>
</dbReference>
<dbReference type="SUPFAM" id="SSF46604">
    <property type="entry name" value="Epsilon subunit of F1F0-ATP synthase C-terminal domain"/>
    <property type="match status" value="1"/>
</dbReference>
<dbReference type="SUPFAM" id="SSF51344">
    <property type="entry name" value="Epsilon subunit of F1F0-ATP synthase N-terminal domain"/>
    <property type="match status" value="1"/>
</dbReference>
<proteinExistence type="evidence at protein level"/>